<feature type="signal peptide" evidence="2">
    <location>
        <begin position="1"/>
        <end position="19"/>
    </location>
</feature>
<feature type="chain" id="PRO_5001967092" description="Immunoglobulin lambda variable 5-52" evidence="2">
    <location>
        <begin position="20"/>
        <end position="124"/>
    </location>
</feature>
<feature type="domain" description="Ig-like" evidence="3">
    <location>
        <begin position="21"/>
        <end position="124" status="greater than"/>
    </location>
</feature>
<feature type="region of interest" description="Framework-1" evidence="1">
    <location>
        <begin position="20"/>
        <end position="44"/>
    </location>
</feature>
<feature type="region of interest" description="Complementarity-determining-1" evidence="1">
    <location>
        <begin position="45"/>
        <end position="53"/>
    </location>
</feature>
<feature type="region of interest" description="Framework-2" evidence="1">
    <location>
        <begin position="54"/>
        <end position="70"/>
    </location>
</feature>
<feature type="region of interest" description="Complementarity-determining-2" evidence="1">
    <location>
        <begin position="71"/>
        <end position="77"/>
    </location>
</feature>
<feature type="region of interest" description="Framework-3" evidence="1">
    <location>
        <begin position="78"/>
        <end position="115"/>
    </location>
</feature>
<feature type="region of interest" description="Complementarity-determining-3" evidence="1">
    <location>
        <begin position="116"/>
        <end position="124" status="greater than"/>
    </location>
</feature>
<feature type="disulfide bond" evidence="3">
    <location>
        <begin position="41"/>
        <end position="115"/>
    </location>
</feature>
<feature type="non-terminal residue">
    <location>
        <position position="124"/>
    </location>
</feature>
<reference key="1">
    <citation type="journal article" date="1999" name="Nature">
        <title>The DNA sequence of human chromosome 22.</title>
        <authorList>
            <person name="Dunham I."/>
            <person name="Hunt A.R."/>
            <person name="Collins J.E."/>
            <person name="Bruskiewich R."/>
            <person name="Beare D.M."/>
            <person name="Clamp M."/>
            <person name="Smink L.J."/>
            <person name="Ainscough R."/>
            <person name="Almeida J.P."/>
            <person name="Babbage A.K."/>
            <person name="Bagguley C."/>
            <person name="Bailey J."/>
            <person name="Barlow K.F."/>
            <person name="Bates K.N."/>
            <person name="Beasley O.P."/>
            <person name="Bird C.P."/>
            <person name="Blakey S.E."/>
            <person name="Bridgeman A.M."/>
            <person name="Buck D."/>
            <person name="Burgess J."/>
            <person name="Burrill W.D."/>
            <person name="Burton J."/>
            <person name="Carder C."/>
            <person name="Carter N.P."/>
            <person name="Chen Y."/>
            <person name="Clark G."/>
            <person name="Clegg S.M."/>
            <person name="Cobley V.E."/>
            <person name="Cole C.G."/>
            <person name="Collier R.E."/>
            <person name="Connor R."/>
            <person name="Conroy D."/>
            <person name="Corby N.R."/>
            <person name="Coville G.J."/>
            <person name="Cox A.V."/>
            <person name="Davis J."/>
            <person name="Dawson E."/>
            <person name="Dhami P.D."/>
            <person name="Dockree C."/>
            <person name="Dodsworth S.J."/>
            <person name="Durbin R.M."/>
            <person name="Ellington A.G."/>
            <person name="Evans K.L."/>
            <person name="Fey J.M."/>
            <person name="Fleming K."/>
            <person name="French L."/>
            <person name="Garner A.A."/>
            <person name="Gilbert J.G.R."/>
            <person name="Goward M.E."/>
            <person name="Grafham D.V."/>
            <person name="Griffiths M.N.D."/>
            <person name="Hall C."/>
            <person name="Hall R.E."/>
            <person name="Hall-Tamlyn G."/>
            <person name="Heathcott R.W."/>
            <person name="Ho S."/>
            <person name="Holmes S."/>
            <person name="Hunt S.E."/>
            <person name="Jones M.C."/>
            <person name="Kershaw J."/>
            <person name="Kimberley A.M."/>
            <person name="King A."/>
            <person name="Laird G.K."/>
            <person name="Langford C.F."/>
            <person name="Leversha M.A."/>
            <person name="Lloyd C."/>
            <person name="Lloyd D.M."/>
            <person name="Martyn I.D."/>
            <person name="Mashreghi-Mohammadi M."/>
            <person name="Matthews L.H."/>
            <person name="Mccann O.T."/>
            <person name="Mcclay J."/>
            <person name="Mclaren S."/>
            <person name="McMurray A.A."/>
            <person name="Milne S.A."/>
            <person name="Mortimore B.J."/>
            <person name="Odell C.N."/>
            <person name="Pavitt R."/>
            <person name="Pearce A.V."/>
            <person name="Pearson D."/>
            <person name="Phillimore B.J.C.T."/>
            <person name="Phillips S.H."/>
            <person name="Plumb R.W."/>
            <person name="Ramsay H."/>
            <person name="Ramsey Y."/>
            <person name="Rogers L."/>
            <person name="Ross M.T."/>
            <person name="Scott C.E."/>
            <person name="Sehra H.K."/>
            <person name="Skuce C.D."/>
            <person name="Smalley S."/>
            <person name="Smith M.L."/>
            <person name="Soderlund C."/>
            <person name="Spragon L."/>
            <person name="Steward C.A."/>
            <person name="Sulston J.E."/>
            <person name="Swann R.M."/>
            <person name="Vaudin M."/>
            <person name="Wall M."/>
            <person name="Wallis J.M."/>
            <person name="Whiteley M.N."/>
            <person name="Willey D.L."/>
            <person name="Williams L."/>
            <person name="Williams S.A."/>
            <person name="Williamson H."/>
            <person name="Wilmer T.E."/>
            <person name="Wilming L."/>
            <person name="Wright C.L."/>
            <person name="Hubbard T."/>
            <person name="Bentley D.R."/>
            <person name="Beck S."/>
            <person name="Rogers J."/>
            <person name="Shimizu N."/>
            <person name="Minoshima S."/>
            <person name="Kawasaki K."/>
            <person name="Sasaki T."/>
            <person name="Asakawa S."/>
            <person name="Kudoh J."/>
            <person name="Shintani A."/>
            <person name="Shibuya K."/>
            <person name="Yoshizaki Y."/>
            <person name="Aoki N."/>
            <person name="Mitsuyama S."/>
            <person name="Roe B.A."/>
            <person name="Chen F."/>
            <person name="Chu L."/>
            <person name="Crabtree J."/>
            <person name="Deschamps S."/>
            <person name="Do A."/>
            <person name="Do T."/>
            <person name="Dorman A."/>
            <person name="Fang F."/>
            <person name="Fu Y."/>
            <person name="Hu P."/>
            <person name="Hua A."/>
            <person name="Kenton S."/>
            <person name="Lai H."/>
            <person name="Lao H.I."/>
            <person name="Lewis J."/>
            <person name="Lewis S."/>
            <person name="Lin S.-P."/>
            <person name="Loh P."/>
            <person name="Malaj E."/>
            <person name="Nguyen T."/>
            <person name="Pan H."/>
            <person name="Phan S."/>
            <person name="Qi S."/>
            <person name="Qian Y."/>
            <person name="Ray L."/>
            <person name="Ren Q."/>
            <person name="Shaull S."/>
            <person name="Sloan D."/>
            <person name="Song L."/>
            <person name="Wang Q."/>
            <person name="Wang Y."/>
            <person name="Wang Z."/>
            <person name="White J."/>
            <person name="Willingham D."/>
            <person name="Wu H."/>
            <person name="Yao Z."/>
            <person name="Zhan M."/>
            <person name="Zhang G."/>
            <person name="Chissoe S."/>
            <person name="Murray J."/>
            <person name="Miller N."/>
            <person name="Minx P."/>
            <person name="Fulton R."/>
            <person name="Johnson D."/>
            <person name="Bemis G."/>
            <person name="Bentley D."/>
            <person name="Bradshaw H."/>
            <person name="Bourne S."/>
            <person name="Cordes M."/>
            <person name="Du Z."/>
            <person name="Fulton L."/>
            <person name="Goela D."/>
            <person name="Graves T."/>
            <person name="Hawkins J."/>
            <person name="Hinds K."/>
            <person name="Kemp K."/>
            <person name="Latreille P."/>
            <person name="Layman D."/>
            <person name="Ozersky P."/>
            <person name="Rohlfing T."/>
            <person name="Scheet P."/>
            <person name="Walker C."/>
            <person name="Wamsley A."/>
            <person name="Wohldmann P."/>
            <person name="Pepin K."/>
            <person name="Nelson J."/>
            <person name="Korf I."/>
            <person name="Bedell J.A."/>
            <person name="Hillier L.W."/>
            <person name="Mardis E."/>
            <person name="Waterston R."/>
            <person name="Wilson R."/>
            <person name="Emanuel B.S."/>
            <person name="Shaikh T."/>
            <person name="Kurahashi H."/>
            <person name="Saitta S."/>
            <person name="Budarf M.L."/>
            <person name="McDermid H.E."/>
            <person name="Johnson A."/>
            <person name="Wong A.C.C."/>
            <person name="Morrow B.E."/>
            <person name="Edelmann L."/>
            <person name="Kim U.J."/>
            <person name="Shizuya H."/>
            <person name="Simon M.I."/>
            <person name="Dumanski J.P."/>
            <person name="Peyrard M."/>
            <person name="Kedra D."/>
            <person name="Seroussi E."/>
            <person name="Fransson I."/>
            <person name="Tapia I."/>
            <person name="Bruder C.E."/>
            <person name="O'Brien K.P."/>
            <person name="Wilkinson P."/>
            <person name="Bodenteich A."/>
            <person name="Hartman K."/>
            <person name="Hu X."/>
            <person name="Khan A.S."/>
            <person name="Lane L."/>
            <person name="Tilahun Y."/>
            <person name="Wright H."/>
        </authorList>
    </citation>
    <scope>NUCLEOTIDE SEQUENCE [LARGE SCALE GENOMIC DNA] (IMGT ALLELE IGLV5-52*01)</scope>
</reference>
<reference key="2">
    <citation type="journal article" date="2001" name="Exp. Clin. Immunogenet.">
        <title>Nomenclature of the human immunoglobulin lambda (IGL) genes.</title>
        <authorList>
            <person name="Lefranc M.P."/>
        </authorList>
    </citation>
    <scope>NOMENCLATURE</scope>
</reference>
<reference key="3">
    <citation type="book" date="2001" name="The Immunoglobulin FactsBook.">
        <title>The Immunoglobulin FactsBook.</title>
        <editorList>
            <person name="Lefranc M.P."/>
            <person name="Lefranc G."/>
        </editorList>
        <authorList>
            <person name="Lefranc M.P."/>
            <person name="Lefranc G."/>
        </authorList>
    </citation>
    <scope>NOMENCLATURE</scope>
</reference>
<reference key="4">
    <citation type="journal article" date="2007" name="Annu. Rev. Genet.">
        <title>Immunoglobulin somatic hypermutation.</title>
        <authorList>
            <person name="Teng G."/>
            <person name="Papavasiliou F.N."/>
        </authorList>
    </citation>
    <scope>REVIEW ON SOMATIC HYPERMUTATION</scope>
</reference>
<reference key="5">
    <citation type="journal article" date="2010" name="J. Allergy Clin. Immunol.">
        <title>Structure and function of immunoglobulins.</title>
        <authorList>
            <person name="Schroeder H.W. Jr."/>
            <person name="Cavacini L."/>
        </authorList>
    </citation>
    <scope>REVIEW ON IMMUNOGLOBULINS</scope>
</reference>
<reference key="6">
    <citation type="journal article" date="2012" name="Nat. Rev. Immunol.">
        <title>Molecular programming of B cell memory.</title>
        <authorList>
            <person name="McHeyzer-Williams M."/>
            <person name="Okitsu S."/>
            <person name="Wang N."/>
            <person name="McHeyzer-Williams L."/>
        </authorList>
    </citation>
    <scope>REVIEW ON FUNCTION</scope>
</reference>
<reference key="7">
    <citation type="journal article" date="2014" name="Front. Immunol.">
        <title>Immunoglobulin and T Cell Receptor Genes: IMGT((R)) and the Birth and Rise of Immunoinformatics.</title>
        <authorList>
            <person name="Lefranc M.P."/>
        </authorList>
    </citation>
    <scope>NOMENCLATURE</scope>
</reference>
<dbReference type="EMBL" id="AC245060">
    <property type="status" value="NOT_ANNOTATED_CDS"/>
    <property type="molecule type" value="Genomic_DNA"/>
</dbReference>
<dbReference type="SMR" id="A0A0A0MRZ9"/>
<dbReference type="FunCoup" id="A0A0A0MRZ9">
    <property type="interactions" value="196"/>
</dbReference>
<dbReference type="IMGT_GENE-DB" id="IGLV5-52"/>
<dbReference type="BioMuta" id="IGLV5-52"/>
<dbReference type="MassIVE" id="A0A0A0MRZ9"/>
<dbReference type="Ensembl" id="ENST00000390289.2">
    <property type="protein sequence ID" value="ENSP00000374824.2"/>
    <property type="gene ID" value="ENSG00000211643.2"/>
</dbReference>
<dbReference type="UCSC" id="uc062cbl.1">
    <property type="organism name" value="human"/>
</dbReference>
<dbReference type="AGR" id="HGNC:5926"/>
<dbReference type="GeneCards" id="IGLV5-52"/>
<dbReference type="HGNC" id="HGNC:5926">
    <property type="gene designation" value="IGLV5-52"/>
</dbReference>
<dbReference type="HPA" id="ENSG00000211643">
    <property type="expression patterns" value="Low tissue specificity"/>
</dbReference>
<dbReference type="neXtProt" id="NX_A0A0A0MRZ9"/>
<dbReference type="VEuPathDB" id="HostDB:ENSG00000211643"/>
<dbReference type="GeneTree" id="ENSGT00940000153520"/>
<dbReference type="HOGENOM" id="CLU_077975_4_0_1"/>
<dbReference type="InParanoid" id="A0A0A0MRZ9"/>
<dbReference type="OMA" id="YCCTYHG"/>
<dbReference type="OrthoDB" id="9537349at2759"/>
<dbReference type="PAN-GO" id="A0A0A0MRZ9">
    <property type="GO annotations" value="3 GO annotations based on evolutionary models"/>
</dbReference>
<dbReference type="PhylomeDB" id="A0A0A0MRZ9"/>
<dbReference type="SignaLink" id="A0A0A0MRZ9"/>
<dbReference type="Pharos" id="A0A0A0MRZ9">
    <property type="development level" value="Tdark"/>
</dbReference>
<dbReference type="PRO" id="PR:A0A0A0MRZ9"/>
<dbReference type="Proteomes" id="UP000005640">
    <property type="component" value="Chromosome 22"/>
</dbReference>
<dbReference type="RNAct" id="A0A0A0MRZ9">
    <property type="molecule type" value="protein"/>
</dbReference>
<dbReference type="Bgee" id="ENSG00000211643">
    <property type="expression patterns" value="Expressed in duodenum and 94 other cell types or tissues"/>
</dbReference>
<dbReference type="GO" id="GO:0005576">
    <property type="term" value="C:extracellular region"/>
    <property type="evidence" value="ECO:0007669"/>
    <property type="project" value="UniProtKB-SubCell"/>
</dbReference>
<dbReference type="GO" id="GO:0019814">
    <property type="term" value="C:immunoglobulin complex"/>
    <property type="evidence" value="ECO:0000318"/>
    <property type="project" value="GO_Central"/>
</dbReference>
<dbReference type="GO" id="GO:0005886">
    <property type="term" value="C:plasma membrane"/>
    <property type="evidence" value="ECO:0007669"/>
    <property type="project" value="UniProtKB-SubCell"/>
</dbReference>
<dbReference type="GO" id="GO:0002250">
    <property type="term" value="P:adaptive immune response"/>
    <property type="evidence" value="ECO:0007669"/>
    <property type="project" value="UniProtKB-KW"/>
</dbReference>
<dbReference type="GO" id="GO:0006955">
    <property type="term" value="P:immune response"/>
    <property type="evidence" value="ECO:0000318"/>
    <property type="project" value="GO_Central"/>
</dbReference>
<dbReference type="FunFam" id="2.60.40.10:FF:000721">
    <property type="entry name" value="Immunoglobulin lambda variable 5-45"/>
    <property type="match status" value="1"/>
</dbReference>
<dbReference type="Gene3D" id="2.60.40.10">
    <property type="entry name" value="Immunoglobulins"/>
    <property type="match status" value="1"/>
</dbReference>
<dbReference type="InterPro" id="IPR007110">
    <property type="entry name" value="Ig-like_dom"/>
</dbReference>
<dbReference type="InterPro" id="IPR036179">
    <property type="entry name" value="Ig-like_dom_sf"/>
</dbReference>
<dbReference type="InterPro" id="IPR013783">
    <property type="entry name" value="Ig-like_fold"/>
</dbReference>
<dbReference type="InterPro" id="IPR003599">
    <property type="entry name" value="Ig_sub"/>
</dbReference>
<dbReference type="InterPro" id="IPR013106">
    <property type="entry name" value="Ig_V-set"/>
</dbReference>
<dbReference type="InterPro" id="IPR050150">
    <property type="entry name" value="IgV_Light_Chain"/>
</dbReference>
<dbReference type="PANTHER" id="PTHR23267">
    <property type="entry name" value="IMMUNOGLOBULIN LIGHT CHAIN"/>
    <property type="match status" value="1"/>
</dbReference>
<dbReference type="Pfam" id="PF07686">
    <property type="entry name" value="V-set"/>
    <property type="match status" value="1"/>
</dbReference>
<dbReference type="SMART" id="SM00409">
    <property type="entry name" value="IG"/>
    <property type="match status" value="1"/>
</dbReference>
<dbReference type="SMART" id="SM00406">
    <property type="entry name" value="IGv"/>
    <property type="match status" value="1"/>
</dbReference>
<dbReference type="SUPFAM" id="SSF48726">
    <property type="entry name" value="Immunoglobulin"/>
    <property type="match status" value="1"/>
</dbReference>
<dbReference type="PROSITE" id="PS50835">
    <property type="entry name" value="IG_LIKE"/>
    <property type="match status" value="1"/>
</dbReference>
<evidence type="ECO:0000250" key="1">
    <source>
        <dbReference type="UniProtKB" id="P01721"/>
    </source>
</evidence>
<evidence type="ECO:0000255" key="2"/>
<evidence type="ECO:0000255" key="3">
    <source>
        <dbReference type="PROSITE-ProRule" id="PRU00114"/>
    </source>
</evidence>
<evidence type="ECO:0000303" key="4">
    <source>
    </source>
</evidence>
<evidence type="ECO:0000303" key="5">
    <source>
    </source>
</evidence>
<evidence type="ECO:0000303" key="6">
    <source>
    </source>
</evidence>
<evidence type="ECO:0000303" key="7">
    <source>
    </source>
</evidence>
<evidence type="ECO:0000303" key="8">
    <source>
    </source>
</evidence>
<evidence type="ECO:0000303" key="9">
    <source ref="3"/>
</evidence>
<evidence type="ECO:0000305" key="10"/>
<keyword id="KW-1064">Adaptive immunity</keyword>
<keyword id="KW-1003">Cell membrane</keyword>
<keyword id="KW-1015">Disulfide bond</keyword>
<keyword id="KW-0391">Immunity</keyword>
<keyword id="KW-1280">Immunoglobulin</keyword>
<keyword id="KW-0393">Immunoglobulin domain</keyword>
<keyword id="KW-0472">Membrane</keyword>
<keyword id="KW-1267">Proteomics identification</keyword>
<keyword id="KW-1185">Reference proteome</keyword>
<keyword id="KW-0964">Secreted</keyword>
<keyword id="KW-0732">Signal</keyword>
<gene>
    <name evidence="4 9" type="primary">IGLV5-52</name>
</gene>
<sequence>MAWTLLLLVLLSHCTGSLSQPVLTQPSSHSASSGASVRLTCMLSSGFSVGDFWIRWYQQKPGNPPRYLLYYHSDSNKGQGSGVPSRFSGSNDASANAGILRISGLQPEDEADYYCGTWHSNSKT</sequence>
<organism>
    <name type="scientific">Homo sapiens</name>
    <name type="common">Human</name>
    <dbReference type="NCBI Taxonomy" id="9606"/>
    <lineage>
        <taxon>Eukaryota</taxon>
        <taxon>Metazoa</taxon>
        <taxon>Chordata</taxon>
        <taxon>Craniata</taxon>
        <taxon>Vertebrata</taxon>
        <taxon>Euteleostomi</taxon>
        <taxon>Mammalia</taxon>
        <taxon>Eutheria</taxon>
        <taxon>Euarchontoglires</taxon>
        <taxon>Primates</taxon>
        <taxon>Haplorrhini</taxon>
        <taxon>Catarrhini</taxon>
        <taxon>Hominidae</taxon>
        <taxon>Homo</taxon>
    </lineage>
</organism>
<comment type="function">
    <text evidence="5 6 7 8">V region of the variable domain of immunoglobulin light chains that participates in the antigen recognition (PubMed:24600447). Immunoglobulins, also known as antibodies, are membrane-bound or secreted glycoproteins produced by B lymphocytes. In the recognition phase of humoral immunity, the membrane-bound immunoglobulins serve as receptors which, upon binding of a specific antigen, trigger the clonal expansion and differentiation of B lymphocytes into immunoglobulins-secreting plasma cells. Secreted immunoglobulins mediate the effector phase of humoral immunity, which results in the elimination of bound antigens (PubMed:20176268, PubMed:22158414). The antigen binding site is formed by the variable domain of one heavy chain, together with that of its associated light chain. Thus, each immunoglobulin has two antigen binding sites with remarkable affinity for a particular antigen. The variable domains are assembled by a process called V-(D)-J rearrangement and can then be subjected to somatic hypermutations which, after exposure to antigen and selection, allow affinity maturation for a particular antigen (PubMed:17576170, PubMed:20176268).</text>
</comment>
<comment type="subunit">
    <text evidence="6">Immunoglobulins are composed of two identical heavy chains and two identical light chains; disulfide-linked.</text>
</comment>
<comment type="subcellular location">
    <subcellularLocation>
        <location evidence="6 7">Secreted</location>
    </subcellularLocation>
    <subcellularLocation>
        <location evidence="6 7">Cell membrane</location>
    </subcellularLocation>
</comment>
<comment type="polymorphism">
    <text>There are several alleles. The sequence shown is that of IMGT allele IGLV5-52*01.</text>
</comment>
<comment type="caution">
    <text evidence="10">For an example of a full-length immunoglobulin lambda light chain see AC P0DOX8.</text>
</comment>
<protein>
    <recommendedName>
        <fullName evidence="4 9">Immunoglobulin lambda variable 5-52</fullName>
    </recommendedName>
</protein>
<proteinExistence type="evidence at protein level"/>
<accession>A0A0A0MRZ9</accession>
<name>LV552_HUMAN</name>